<comment type="function">
    <text evidence="1 2">Essential protein (By similarity). Component of the origin recognition complex (ORC) that binds origins of replication. DNA-binding is ATP-dependent, however specific DNA sequences that define origins of replication have not been identified so far. ORC is required to assemble the pre-replication complex necessary to initiate DNA replication (By similarity).</text>
</comment>
<comment type="subunit">
    <text evidence="2">Component of the origin recognition complex (ORC) composed of at least ORC1, ORC2, ORC3, ORC4, ORC5 and ORC6. ORC is regulated in a cell-cycle and development dependent manner. It is sequentially assembled at the exit from anaphase of mitosis and disassembled as cells enter S phase.</text>
</comment>
<comment type="subcellular location">
    <subcellularLocation>
        <location evidence="4">Nucleus</location>
    </subcellularLocation>
</comment>
<comment type="tissue specificity">
    <text evidence="4 5">Mostly expressed in roots, seedling and inflorescence meristem, and, to a lower extent, in mature leaves and shoot. Higher levels in inflorescence meristem than in shoot apical meristem (SAM).</text>
</comment>
<comment type="similarity">
    <text evidence="7">Belongs to the ORC2 family.</text>
</comment>
<reference key="1">
    <citation type="journal article" date="2005" name="Biotechnol. Lett.">
        <title>Cloning and characterization of OsORC2, a new member of rice origin recognition complex.</title>
        <authorList>
            <person name="Li K.-G."/>
            <person name="Yang J.-S."/>
            <person name="Attia K."/>
            <person name="Su W."/>
            <person name="He G.-M."/>
            <person name="Qian X.-Y."/>
        </authorList>
    </citation>
    <scope>NUCLEOTIDE SEQUENCE [MRNA]</scope>
    <scope>TISSUE SPECIFICITY</scope>
    <source>
        <strain>cv. Zhenxian 97B</strain>
        <tissue>Panicle</tissue>
    </source>
</reference>
<reference key="2">
    <citation type="journal article" date="2005" name="Gene">
        <title>Characterization of the origin recognition complex (ORC) from a higher plant, rice (Oryza sativa L.).</title>
        <authorList>
            <person name="Mori Y."/>
            <person name="Yamamoto T."/>
            <person name="Sakaguchi N."/>
            <person name="Ishibashi T."/>
            <person name="Furukawa T."/>
            <person name="Kadota Y."/>
            <person name="Kuchitsu K."/>
            <person name="Hashimoto J."/>
            <person name="Kimura S."/>
            <person name="Sakaguchi K."/>
        </authorList>
    </citation>
    <scope>NUCLEOTIDE SEQUENCE [MRNA]</scope>
    <scope>SUBCELLULAR LOCATION</scope>
    <scope>TISSUE SPECIFICITY</scope>
    <scope>GENE FAMILY</scope>
    <scope>NOMENCLATURE</scope>
    <source>
        <strain>cv. Nipponbare</strain>
    </source>
</reference>
<reference key="3">
    <citation type="journal article" date="2005" name="Genome Res.">
        <title>Sequence, annotation, and analysis of synteny between rice chromosome 3 and diverged grass species.</title>
        <authorList>
            <consortium name="The rice chromosome 3 sequencing consortium"/>
            <person name="Buell C.R."/>
            <person name="Yuan Q."/>
            <person name="Ouyang S."/>
            <person name="Liu J."/>
            <person name="Zhu W."/>
            <person name="Wang A."/>
            <person name="Maiti R."/>
            <person name="Haas B."/>
            <person name="Wortman J."/>
            <person name="Pertea M."/>
            <person name="Jones K.M."/>
            <person name="Kim M."/>
            <person name="Overton L."/>
            <person name="Tsitrin T."/>
            <person name="Fadrosh D."/>
            <person name="Bera J."/>
            <person name="Weaver B."/>
            <person name="Jin S."/>
            <person name="Johri S."/>
            <person name="Reardon M."/>
            <person name="Webb K."/>
            <person name="Hill J."/>
            <person name="Moffat K."/>
            <person name="Tallon L."/>
            <person name="Van Aken S."/>
            <person name="Lewis M."/>
            <person name="Utterback T."/>
            <person name="Feldblyum T."/>
            <person name="Zismann V."/>
            <person name="Iobst S."/>
            <person name="Hsiao J."/>
            <person name="de Vazeille A.R."/>
            <person name="Salzberg S.L."/>
            <person name="White O."/>
            <person name="Fraser C.M."/>
            <person name="Yu Y."/>
            <person name="Kim H."/>
            <person name="Rambo T."/>
            <person name="Currie J."/>
            <person name="Collura K."/>
            <person name="Kernodle-Thompson S."/>
            <person name="Wei F."/>
            <person name="Kudrna K."/>
            <person name="Ammiraju J.S.S."/>
            <person name="Luo M."/>
            <person name="Goicoechea J.L."/>
            <person name="Wing R.A."/>
            <person name="Henry D."/>
            <person name="Oates R."/>
            <person name="Palmer M."/>
            <person name="Pries G."/>
            <person name="Saski C."/>
            <person name="Simmons J."/>
            <person name="Soderlund C."/>
            <person name="Nelson W."/>
            <person name="de la Bastide M."/>
            <person name="Spiegel L."/>
            <person name="Nascimento L."/>
            <person name="Huang E."/>
            <person name="Preston R."/>
            <person name="Zutavern T."/>
            <person name="Palmer L."/>
            <person name="O'Shaughnessy A."/>
            <person name="Dike S."/>
            <person name="McCombie W.R."/>
            <person name="Minx P."/>
            <person name="Cordum H."/>
            <person name="Wilson R."/>
            <person name="Jin W."/>
            <person name="Lee H.R."/>
            <person name="Jiang J."/>
            <person name="Jackson S."/>
        </authorList>
    </citation>
    <scope>NUCLEOTIDE SEQUENCE [LARGE SCALE GENOMIC DNA]</scope>
    <source>
        <strain>cv. Nipponbare</strain>
    </source>
</reference>
<reference key="4">
    <citation type="journal article" date="2005" name="Nature">
        <title>The map-based sequence of the rice genome.</title>
        <authorList>
            <consortium name="International rice genome sequencing project (IRGSP)"/>
        </authorList>
    </citation>
    <scope>NUCLEOTIDE SEQUENCE [LARGE SCALE GENOMIC DNA]</scope>
    <source>
        <strain>cv. Nipponbare</strain>
    </source>
</reference>
<reference key="5">
    <citation type="journal article" date="2008" name="Nucleic Acids Res.">
        <title>The rice annotation project database (RAP-DB): 2008 update.</title>
        <authorList>
            <consortium name="The rice annotation project (RAP)"/>
        </authorList>
    </citation>
    <scope>GENOME REANNOTATION</scope>
    <source>
        <strain>cv. Nipponbare</strain>
    </source>
</reference>
<reference key="6">
    <citation type="journal article" date="2013" name="Rice">
        <title>Improvement of the Oryza sativa Nipponbare reference genome using next generation sequence and optical map data.</title>
        <authorList>
            <person name="Kawahara Y."/>
            <person name="de la Bastide M."/>
            <person name="Hamilton J.P."/>
            <person name="Kanamori H."/>
            <person name="McCombie W.R."/>
            <person name="Ouyang S."/>
            <person name="Schwartz D.C."/>
            <person name="Tanaka T."/>
            <person name="Wu J."/>
            <person name="Zhou S."/>
            <person name="Childs K.L."/>
            <person name="Davidson R.M."/>
            <person name="Lin H."/>
            <person name="Quesada-Ocampo L."/>
            <person name="Vaillancourt B."/>
            <person name="Sakai H."/>
            <person name="Lee S.S."/>
            <person name="Kim J."/>
            <person name="Numa H."/>
            <person name="Itoh T."/>
            <person name="Buell C.R."/>
            <person name="Matsumoto T."/>
        </authorList>
    </citation>
    <scope>GENOME REANNOTATION</scope>
    <source>
        <strain>cv. Nipponbare</strain>
    </source>
</reference>
<reference key="7">
    <citation type="journal article" date="2005" name="PLoS Biol.">
        <title>The genomes of Oryza sativa: a history of duplications.</title>
        <authorList>
            <person name="Yu J."/>
            <person name="Wang J."/>
            <person name="Lin W."/>
            <person name="Li S."/>
            <person name="Li H."/>
            <person name="Zhou J."/>
            <person name="Ni P."/>
            <person name="Dong W."/>
            <person name="Hu S."/>
            <person name="Zeng C."/>
            <person name="Zhang J."/>
            <person name="Zhang Y."/>
            <person name="Li R."/>
            <person name="Xu Z."/>
            <person name="Li S."/>
            <person name="Li X."/>
            <person name="Zheng H."/>
            <person name="Cong L."/>
            <person name="Lin L."/>
            <person name="Yin J."/>
            <person name="Geng J."/>
            <person name="Li G."/>
            <person name="Shi J."/>
            <person name="Liu J."/>
            <person name="Lv H."/>
            <person name="Li J."/>
            <person name="Wang J."/>
            <person name="Deng Y."/>
            <person name="Ran L."/>
            <person name="Shi X."/>
            <person name="Wang X."/>
            <person name="Wu Q."/>
            <person name="Li C."/>
            <person name="Ren X."/>
            <person name="Wang J."/>
            <person name="Wang X."/>
            <person name="Li D."/>
            <person name="Liu D."/>
            <person name="Zhang X."/>
            <person name="Ji Z."/>
            <person name="Zhao W."/>
            <person name="Sun Y."/>
            <person name="Zhang Z."/>
            <person name="Bao J."/>
            <person name="Han Y."/>
            <person name="Dong L."/>
            <person name="Ji J."/>
            <person name="Chen P."/>
            <person name="Wu S."/>
            <person name="Liu J."/>
            <person name="Xiao Y."/>
            <person name="Bu D."/>
            <person name="Tan J."/>
            <person name="Yang L."/>
            <person name="Ye C."/>
            <person name="Zhang J."/>
            <person name="Xu J."/>
            <person name="Zhou Y."/>
            <person name="Yu Y."/>
            <person name="Zhang B."/>
            <person name="Zhuang S."/>
            <person name="Wei H."/>
            <person name="Liu B."/>
            <person name="Lei M."/>
            <person name="Yu H."/>
            <person name="Li Y."/>
            <person name="Xu H."/>
            <person name="Wei S."/>
            <person name="He X."/>
            <person name="Fang L."/>
            <person name="Zhang Z."/>
            <person name="Zhang Y."/>
            <person name="Huang X."/>
            <person name="Su Z."/>
            <person name="Tong W."/>
            <person name="Li J."/>
            <person name="Tong Z."/>
            <person name="Li S."/>
            <person name="Ye J."/>
            <person name="Wang L."/>
            <person name="Fang L."/>
            <person name="Lei T."/>
            <person name="Chen C.-S."/>
            <person name="Chen H.-C."/>
            <person name="Xu Z."/>
            <person name="Li H."/>
            <person name="Huang H."/>
            <person name="Zhang F."/>
            <person name="Xu H."/>
            <person name="Li N."/>
            <person name="Zhao C."/>
            <person name="Li S."/>
            <person name="Dong L."/>
            <person name="Huang Y."/>
            <person name="Li L."/>
            <person name="Xi Y."/>
            <person name="Qi Q."/>
            <person name="Li W."/>
            <person name="Zhang B."/>
            <person name="Hu W."/>
            <person name="Zhang Y."/>
            <person name="Tian X."/>
            <person name="Jiao Y."/>
            <person name="Liang X."/>
            <person name="Jin J."/>
            <person name="Gao L."/>
            <person name="Zheng W."/>
            <person name="Hao B."/>
            <person name="Liu S.-M."/>
            <person name="Wang W."/>
            <person name="Yuan L."/>
            <person name="Cao M."/>
            <person name="McDermott J."/>
            <person name="Samudrala R."/>
            <person name="Wang J."/>
            <person name="Wong G.K.-S."/>
            <person name="Yang H."/>
        </authorList>
    </citation>
    <scope>NUCLEOTIDE SEQUENCE [LARGE SCALE GENOMIC DNA]</scope>
    <source>
        <strain>cv. Nipponbare</strain>
    </source>
</reference>
<reference key="8">
    <citation type="submission" date="2006-10" db="EMBL/GenBank/DDBJ databases">
        <title>Oryza sativa full length cDNA.</title>
        <authorList>
            <person name="Kikuchi S."/>
            <person name="Adachi J."/>
            <person name="Aizawa K."/>
            <person name="Akimura T."/>
            <person name="Arakawa T."/>
            <person name="Carninci P."/>
            <person name="Doi K."/>
            <person name="Fujimura T."/>
            <person name="Fukuda S."/>
            <person name="Hanagaki T."/>
            <person name="Hara A."/>
            <person name="Hashizume W."/>
            <person name="Hayashida K."/>
            <person name="Hayashizaki Y."/>
            <person name="Hayatsu N."/>
            <person name="Hiramoto K."/>
            <person name="Hiraoka T."/>
            <person name="Hori F."/>
            <person name="Hotta I."/>
            <person name="Iida J."/>
            <person name="Iida Y."/>
            <person name="Ikeda R."/>
            <person name="Imamura K."/>
            <person name="Imotani K."/>
            <person name="Ishibiki J."/>
            <person name="Ishii Y."/>
            <person name="Ishikawa M."/>
            <person name="Itoh M."/>
            <person name="Kagawa I."/>
            <person name="Kanagawa S."/>
            <person name="Katoh H."/>
            <person name="Kawagashira N."/>
            <person name="Kawai J."/>
            <person name="Kawamata M."/>
            <person name="Kishikawa-Hirozane T."/>
            <person name="Kishimoto N."/>
            <person name="Kobayashi M."/>
            <person name="Kodama T."/>
            <person name="Kojima K."/>
            <person name="Kojima Y."/>
            <person name="Kondo S."/>
            <person name="Konno H."/>
            <person name="Kouda M."/>
            <person name="Koya S."/>
            <person name="Kurihara C."/>
            <person name="Kurosaki T."/>
            <person name="Kusumegi T."/>
            <person name="Li C."/>
            <person name="Lu M."/>
            <person name="Masuda H."/>
            <person name="Matsubara K."/>
            <person name="Matsuyama T."/>
            <person name="Miura J."/>
            <person name="Miyazaki A."/>
            <person name="Mizuno K."/>
            <person name="Murakami K."/>
            <person name="Murata M."/>
            <person name="Nagata T."/>
            <person name="Nakahama Y."/>
            <person name="Nakamura M."/>
            <person name="Namiki T."/>
            <person name="Narikawa R."/>
            <person name="Niikura J."/>
            <person name="Nishi K."/>
            <person name="Nomura K."/>
            <person name="Numasaki R."/>
            <person name="Ohneda E."/>
            <person name="Ohno M."/>
            <person name="Ohtsuki K."/>
            <person name="Oka M."/>
            <person name="Ooka H."/>
            <person name="Osato N."/>
            <person name="Ota Y."/>
            <person name="Otomo Y."/>
            <person name="Ryu R."/>
            <person name="Saitoh H."/>
            <person name="Sakai C."/>
            <person name="Sakai K."/>
            <person name="Sakazume N."/>
            <person name="Sano H."/>
            <person name="Sasaki D."/>
            <person name="Sato K."/>
            <person name="Satoh K."/>
            <person name="Shibata K."/>
            <person name="Shinagawa A."/>
            <person name="Shiraki T."/>
            <person name="Shishiki T."/>
            <person name="Sogabe Y."/>
            <person name="Sugano S."/>
            <person name="Sugiyama A."/>
            <person name="Suzuki K."/>
            <person name="Suzuki Y."/>
            <person name="Tagami M."/>
            <person name="Tagami-Takeda Y."/>
            <person name="Tagawa A."/>
            <person name="Takahashi F."/>
            <person name="Takaku-Akahira S."/>
            <person name="Tanaka T."/>
            <person name="Tomaru A."/>
            <person name="Toya T."/>
            <person name="Tsunoda Y."/>
            <person name="Ueda M."/>
            <person name="Waki K."/>
            <person name="Xie Q."/>
            <person name="Yahagi W."/>
            <person name="Yamada H."/>
            <person name="Yamamoto M."/>
            <person name="Yasunishi A."/>
            <person name="Yazaki J."/>
            <person name="Yokomizo S."/>
            <person name="Yoshimura A."/>
            <person name="Eguchi K."/>
            <person name="Kanamori H."/>
            <person name="Yamagata H."/>
            <person name="Kamiya K."/>
            <person name="Kurita K."/>
            <person name="Kikuta A."/>
            <person name="Bito T."/>
        </authorList>
    </citation>
    <scope>NUCLEOTIDE SEQUENCE [LARGE SCALE MRNA]</scope>
    <source>
        <strain>cv. Nipponbare</strain>
        <tissue>Pistil</tissue>
    </source>
</reference>
<reference key="9">
    <citation type="journal article" date="2007" name="Plant Physiol.">
        <title>Genome-wide analysis of the core DNA replication machinery in the higher plants Arabidopsis and rice.</title>
        <authorList>
            <person name="Shultz R.W."/>
            <person name="Tatineni V.M."/>
            <person name="Hanley-Bowdoin L."/>
            <person name="Thompson W.F."/>
        </authorList>
    </citation>
    <scope>REVIEW ON THE CORE DNA REPLICATION MACHINERY</scope>
</reference>
<organism evidence="9">
    <name type="scientific">Oryza sativa subsp. japonica</name>
    <name type="common">Rice</name>
    <dbReference type="NCBI Taxonomy" id="39947"/>
    <lineage>
        <taxon>Eukaryota</taxon>
        <taxon>Viridiplantae</taxon>
        <taxon>Streptophyta</taxon>
        <taxon>Embryophyta</taxon>
        <taxon>Tracheophyta</taxon>
        <taxon>Spermatophyta</taxon>
        <taxon>Magnoliopsida</taxon>
        <taxon>Liliopsida</taxon>
        <taxon>Poales</taxon>
        <taxon>Poaceae</taxon>
        <taxon>BOP clade</taxon>
        <taxon>Oryzoideae</taxon>
        <taxon>Oryzeae</taxon>
        <taxon>Oryzinae</taxon>
        <taxon>Oryza</taxon>
        <taxon>Oryza sativa</taxon>
    </lineage>
</organism>
<gene>
    <name evidence="6" type="primary">ORC2</name>
    <name evidence="7" type="ordered locus">LOC_Os03g08640</name>
    <name evidence="7" type="ordered locus">Os03g0184700</name>
    <name evidence="8" type="ORF">OsJ_09689</name>
</gene>
<dbReference type="EMBL" id="AF140487">
    <property type="protein sequence ID" value="AAD29700.2"/>
    <property type="molecule type" value="mRNA"/>
</dbReference>
<dbReference type="EMBL" id="AB104466">
    <property type="protein sequence ID" value="BAC57497.1"/>
    <property type="molecule type" value="mRNA"/>
</dbReference>
<dbReference type="EMBL" id="DP000009">
    <property type="protein sequence ID" value="ABF94350.1"/>
    <property type="molecule type" value="Genomic_DNA"/>
</dbReference>
<dbReference type="EMBL" id="AP008209">
    <property type="protein sequence ID" value="BAF11106.1"/>
    <property type="molecule type" value="Genomic_DNA"/>
</dbReference>
<dbReference type="EMBL" id="AP014959">
    <property type="protein sequence ID" value="BAS82665.1"/>
    <property type="molecule type" value="Genomic_DNA"/>
</dbReference>
<dbReference type="EMBL" id="CM000140">
    <property type="protein sequence ID" value="EEE58456.1"/>
    <property type="molecule type" value="Genomic_DNA"/>
</dbReference>
<dbReference type="EMBL" id="AK242821">
    <property type="protein sequence ID" value="BAH01354.1"/>
    <property type="molecule type" value="mRNA"/>
</dbReference>
<dbReference type="RefSeq" id="XP_015632472.1">
    <property type="nucleotide sequence ID" value="XM_015776986.1"/>
</dbReference>
<dbReference type="RefSeq" id="XP_015632473.1">
    <property type="nucleotide sequence ID" value="XM_015776987.1"/>
</dbReference>
<dbReference type="SMR" id="Q10QS7"/>
<dbReference type="FunCoup" id="Q10QS7">
    <property type="interactions" value="2643"/>
</dbReference>
<dbReference type="STRING" id="39947.Q10QS7"/>
<dbReference type="PaxDb" id="39947-Q10QS7"/>
<dbReference type="EnsemblPlants" id="Os03t0184700-01">
    <property type="protein sequence ID" value="Os03t0184700-01"/>
    <property type="gene ID" value="Os03g0184700"/>
</dbReference>
<dbReference type="Gramene" id="Os03t0184700-01">
    <property type="protein sequence ID" value="Os03t0184700-01"/>
    <property type="gene ID" value="Os03g0184700"/>
</dbReference>
<dbReference type="KEGG" id="dosa:Os03g0184700"/>
<dbReference type="eggNOG" id="KOG2928">
    <property type="taxonomic scope" value="Eukaryota"/>
</dbReference>
<dbReference type="HOGENOM" id="CLU_018596_1_0_1"/>
<dbReference type="InParanoid" id="Q10QS7"/>
<dbReference type="OMA" id="YDFELAY"/>
<dbReference type="OrthoDB" id="20198at2759"/>
<dbReference type="PlantReactome" id="R-OSA-9640882">
    <property type="pathway name" value="Assembly of pre-replication complex"/>
</dbReference>
<dbReference type="PlantReactome" id="R-OSA-9645850">
    <property type="pathway name" value="Activation of pre-replication complex"/>
</dbReference>
<dbReference type="Proteomes" id="UP000000763">
    <property type="component" value="Chromosome 3"/>
</dbReference>
<dbReference type="Proteomes" id="UP000007752">
    <property type="component" value="Chromosome 3"/>
</dbReference>
<dbReference type="Proteomes" id="UP000059680">
    <property type="component" value="Chromosome 3"/>
</dbReference>
<dbReference type="GO" id="GO:0005664">
    <property type="term" value="C:nuclear origin of replication recognition complex"/>
    <property type="evidence" value="ECO:0000318"/>
    <property type="project" value="GO_Central"/>
</dbReference>
<dbReference type="GO" id="GO:0003688">
    <property type="term" value="F:DNA replication origin binding"/>
    <property type="evidence" value="ECO:0000318"/>
    <property type="project" value="GO_Central"/>
</dbReference>
<dbReference type="GO" id="GO:0006260">
    <property type="term" value="P:DNA replication"/>
    <property type="evidence" value="ECO:0007669"/>
    <property type="project" value="UniProtKB-KW"/>
</dbReference>
<dbReference type="InterPro" id="IPR007220">
    <property type="entry name" value="ORC2"/>
</dbReference>
<dbReference type="InterPro" id="IPR056772">
    <property type="entry name" value="RecA-like_ORC2"/>
</dbReference>
<dbReference type="InterPro" id="IPR056773">
    <property type="entry name" value="WHD_ORC2"/>
</dbReference>
<dbReference type="PANTHER" id="PTHR14052">
    <property type="entry name" value="ORIGIN RECOGNITION COMPLEX SUBUNIT 2"/>
    <property type="match status" value="1"/>
</dbReference>
<dbReference type="PANTHER" id="PTHR14052:SF0">
    <property type="entry name" value="ORIGIN RECOGNITION COMPLEX SUBUNIT 2"/>
    <property type="match status" value="1"/>
</dbReference>
<dbReference type="Pfam" id="PF04084">
    <property type="entry name" value="RecA-like_ORC2"/>
    <property type="match status" value="1"/>
</dbReference>
<dbReference type="Pfam" id="PF24882">
    <property type="entry name" value="WHD_ORC2"/>
    <property type="match status" value="1"/>
</dbReference>
<accession>Q10QS7</accession>
<accession>A0A0N7KGQ4</accession>
<accession>Q852P2</accession>
<accession>Q9XFD6</accession>
<sequence length="379" mass="42590">MALRGGHAAAAAGVSSGSEDDDEEAGFSRSYFLAKEKEPSSGKKRARAAGKLSDLNLVDEQVLRASLAEIPPKHEREVEALTRSYKEQYRNWLFELRCGFGLLMYGFGSKKMLLEDFASTTLSDFTVIVVNGYLPSINLKQVIVTIAEIFWEQTKLKRKRQTATRSQLQPFASQSIDDIISFLNNQTSDNGDDNVCLLIHNIDGPALRDAESQQYLAQVSCCPQVHVVASVDHVNAPLLWDKKMVHTQFKWSWYHVPTFAPYKVEGVFYPLILASGGHAQTMKTALVVLQSLTPNAQSVFRVLAEYQLAHEKEEGMHFSSLYTKCRERFLVSSQVTLNSHLTEFKDHDLVKIRKHSDGQDCLHIPLVSDALEKLLQELT</sequence>
<feature type="chain" id="PRO_0000431429" description="Origin of replication complex subunit 2">
    <location>
        <begin position="1"/>
        <end position="379"/>
    </location>
</feature>
<feature type="region of interest" description="Disordered" evidence="3">
    <location>
        <begin position="1"/>
        <end position="25"/>
    </location>
</feature>
<feature type="compositionally biased region" description="Low complexity" evidence="3">
    <location>
        <begin position="8"/>
        <end position="17"/>
    </location>
</feature>
<feature type="sequence conflict" description="In Ref. 1; AAD29700 and 2; BAC57497." evidence="7" ref="1 2">
    <original>I</original>
    <variation>V</variation>
    <location>
        <position position="146"/>
    </location>
</feature>
<feature type="sequence conflict" description="In Ref. 1; AAD29700 and 2; BAC57497." evidence="7" ref="1 2">
    <original>N</original>
    <variation>D</variation>
    <location>
        <position position="185"/>
    </location>
</feature>
<feature type="sequence conflict" description="In Ref. 1; AAD29700 and 2; BAC57497." evidence="7" ref="1 2">
    <original>M</original>
    <variation>L</variation>
    <location>
        <position position="244"/>
    </location>
</feature>
<name>ORC2_ORYSJ</name>
<keyword id="KW-0235">DNA replication</keyword>
<keyword id="KW-0539">Nucleus</keyword>
<keyword id="KW-1185">Reference proteome</keyword>
<proteinExistence type="evidence at transcript level"/>
<evidence type="ECO:0000250" key="1"/>
<evidence type="ECO:0000250" key="2">
    <source>
        <dbReference type="UniProtKB" id="Q38899"/>
    </source>
</evidence>
<evidence type="ECO:0000256" key="3">
    <source>
        <dbReference type="SAM" id="MobiDB-lite"/>
    </source>
</evidence>
<evidence type="ECO:0000269" key="4">
    <source>
    </source>
</evidence>
<evidence type="ECO:0000269" key="5">
    <source>
    </source>
</evidence>
<evidence type="ECO:0000303" key="6">
    <source>
    </source>
</evidence>
<evidence type="ECO:0000305" key="7"/>
<evidence type="ECO:0000312" key="8">
    <source>
        <dbReference type="EMBL" id="EEE58456.1"/>
    </source>
</evidence>
<evidence type="ECO:0000312" key="9">
    <source>
        <dbReference type="Proteomes" id="UP000059680"/>
    </source>
</evidence>
<protein>
    <recommendedName>
        <fullName evidence="6">Origin of replication complex subunit 2</fullName>
        <shortName evidence="6">OsORC2</shortName>
    </recommendedName>
</protein>